<name>CAPP_PROMH</name>
<sequence length="878" mass="98678">MNQQYSAMRSNVSMLGKLLGDTIKEALGEEILDKVESIRKLSKSSRAGNEVQRQKLLLTLQNLSNDELLPVARAFNQFLNLTNVAEQYHSISPHGEAASNPVALAKLIERLKDKNFTNQQLKQAVEQISIELVLTAHPTEIARRTLIHKLVEVNTCLSQLDHDDLADYERTNIMRRLRQLVAQSWHTDEIRKIRPTPIDEAKWGFAVVENSLWEGVPAFLREFNEQLEESIDYNLPVEASPIRFTSWMGGDRDGNPNVTAEITRHALLLSRWKAADLFLNDIQVLVSELSMTESTPELRELAGGADVAEPYREIAKQLRTRLQVTRDYLEQRIKGQQSLPPEGLLIDNSALWEPLYACYQSLHQCGMRIIANGQLLDTLRRIRCFGLQLVRLDIRQESTNHTEALSELTQYLELGDYASWSEEQKQTFLLTELNSKRPLIPTHWQPSEATKEVFETCRVIAESPKDSIASYVISMAKVPSDVLAVKLLLKEAGADIRLPVAPLFETLEDLNNAESVMTRLFDIPWYRDLIDNKQMVMIGYSDSAKDAGVMAASWAQYRAQDALIKLCEKSGVTLTLFHGRGGTIGRGGAPAHAALLSQPPGSLKGGLRVTEQGEMIRFKFGLPQVTISSLAHYAGAILEANLLPPPEPKTAWIEVMDALSDVSCEMYRGYVRGEKDFVPYFRAATPEGELGKLPLGSRPAKRRPTGGVETLRAIPWIFAWTQNRLMLPAWLGAGAALQHEIDNGKQAVLDDMCENWPFFNTRIAMLEMVYAKADLWLAEYYDQRLVEENLWPLGAKLRQQLSDDIKSVLAISKDEHLMADLPWVAESIALRNVYTDPLNVLQAELLQRSRTHSESDPRIEQALMVTIAGIAAGMRNTG</sequence>
<comment type="function">
    <text evidence="1">Forms oxaloacetate, a four-carbon dicarboxylic acid source for the tricarboxylic acid cycle.</text>
</comment>
<comment type="catalytic activity">
    <reaction evidence="1">
        <text>oxaloacetate + phosphate = phosphoenolpyruvate + hydrogencarbonate</text>
        <dbReference type="Rhea" id="RHEA:28370"/>
        <dbReference type="ChEBI" id="CHEBI:16452"/>
        <dbReference type="ChEBI" id="CHEBI:17544"/>
        <dbReference type="ChEBI" id="CHEBI:43474"/>
        <dbReference type="ChEBI" id="CHEBI:58702"/>
        <dbReference type="EC" id="4.1.1.31"/>
    </reaction>
</comment>
<comment type="cofactor">
    <cofactor evidence="1">
        <name>Mg(2+)</name>
        <dbReference type="ChEBI" id="CHEBI:18420"/>
    </cofactor>
</comment>
<comment type="similarity">
    <text evidence="1">Belongs to the PEPCase type 1 family.</text>
</comment>
<organism>
    <name type="scientific">Proteus mirabilis (strain HI4320)</name>
    <dbReference type="NCBI Taxonomy" id="529507"/>
    <lineage>
        <taxon>Bacteria</taxon>
        <taxon>Pseudomonadati</taxon>
        <taxon>Pseudomonadota</taxon>
        <taxon>Gammaproteobacteria</taxon>
        <taxon>Enterobacterales</taxon>
        <taxon>Morganellaceae</taxon>
        <taxon>Proteus</taxon>
    </lineage>
</organism>
<dbReference type="EC" id="4.1.1.31" evidence="1"/>
<dbReference type="EMBL" id="AM942759">
    <property type="protein sequence ID" value="CAR46321.1"/>
    <property type="molecule type" value="Genomic_DNA"/>
</dbReference>
<dbReference type="RefSeq" id="WP_004246402.1">
    <property type="nucleotide sequence ID" value="NC_010554.1"/>
</dbReference>
<dbReference type="SMR" id="B4F183"/>
<dbReference type="EnsemblBacteria" id="CAR46321">
    <property type="protein sequence ID" value="CAR46321"/>
    <property type="gene ID" value="PMI3227"/>
</dbReference>
<dbReference type="GeneID" id="6801836"/>
<dbReference type="KEGG" id="pmr:PMI3227"/>
<dbReference type="eggNOG" id="COG2352">
    <property type="taxonomic scope" value="Bacteria"/>
</dbReference>
<dbReference type="HOGENOM" id="CLU_006557_2_0_6"/>
<dbReference type="Proteomes" id="UP000008319">
    <property type="component" value="Chromosome"/>
</dbReference>
<dbReference type="GO" id="GO:0005829">
    <property type="term" value="C:cytosol"/>
    <property type="evidence" value="ECO:0007669"/>
    <property type="project" value="TreeGrafter"/>
</dbReference>
<dbReference type="GO" id="GO:0000287">
    <property type="term" value="F:magnesium ion binding"/>
    <property type="evidence" value="ECO:0007669"/>
    <property type="project" value="UniProtKB-UniRule"/>
</dbReference>
<dbReference type="GO" id="GO:0008964">
    <property type="term" value="F:phosphoenolpyruvate carboxylase activity"/>
    <property type="evidence" value="ECO:0007669"/>
    <property type="project" value="UniProtKB-UniRule"/>
</dbReference>
<dbReference type="GO" id="GO:0015977">
    <property type="term" value="P:carbon fixation"/>
    <property type="evidence" value="ECO:0007669"/>
    <property type="project" value="UniProtKB-UniRule"/>
</dbReference>
<dbReference type="GO" id="GO:0006107">
    <property type="term" value="P:oxaloacetate metabolic process"/>
    <property type="evidence" value="ECO:0007669"/>
    <property type="project" value="UniProtKB-UniRule"/>
</dbReference>
<dbReference type="GO" id="GO:0006099">
    <property type="term" value="P:tricarboxylic acid cycle"/>
    <property type="evidence" value="ECO:0007669"/>
    <property type="project" value="InterPro"/>
</dbReference>
<dbReference type="FunFam" id="1.20.1440.90:FF:000002">
    <property type="entry name" value="Phosphoenolpyruvate carboxylase"/>
    <property type="match status" value="1"/>
</dbReference>
<dbReference type="Gene3D" id="1.20.1440.90">
    <property type="entry name" value="Phosphoenolpyruvate/pyruvate domain"/>
    <property type="match status" value="1"/>
</dbReference>
<dbReference type="HAMAP" id="MF_00595">
    <property type="entry name" value="PEPcase_type1"/>
    <property type="match status" value="1"/>
</dbReference>
<dbReference type="InterPro" id="IPR021135">
    <property type="entry name" value="PEP_COase"/>
</dbReference>
<dbReference type="InterPro" id="IPR022805">
    <property type="entry name" value="PEP_COase_bac/pln-type"/>
</dbReference>
<dbReference type="InterPro" id="IPR018129">
    <property type="entry name" value="PEP_COase_Lys_AS"/>
</dbReference>
<dbReference type="InterPro" id="IPR033129">
    <property type="entry name" value="PEPCASE_His_AS"/>
</dbReference>
<dbReference type="InterPro" id="IPR015813">
    <property type="entry name" value="Pyrv/PenolPyrv_kinase-like_dom"/>
</dbReference>
<dbReference type="NCBIfam" id="NF000584">
    <property type="entry name" value="PRK00009.1"/>
    <property type="match status" value="1"/>
</dbReference>
<dbReference type="PANTHER" id="PTHR30523">
    <property type="entry name" value="PHOSPHOENOLPYRUVATE CARBOXYLASE"/>
    <property type="match status" value="1"/>
</dbReference>
<dbReference type="PANTHER" id="PTHR30523:SF6">
    <property type="entry name" value="PHOSPHOENOLPYRUVATE CARBOXYLASE"/>
    <property type="match status" value="1"/>
</dbReference>
<dbReference type="Pfam" id="PF00311">
    <property type="entry name" value="PEPcase"/>
    <property type="match status" value="1"/>
</dbReference>
<dbReference type="PRINTS" id="PR00150">
    <property type="entry name" value="PEPCARBXLASE"/>
</dbReference>
<dbReference type="SUPFAM" id="SSF51621">
    <property type="entry name" value="Phosphoenolpyruvate/pyruvate domain"/>
    <property type="match status" value="1"/>
</dbReference>
<dbReference type="PROSITE" id="PS00781">
    <property type="entry name" value="PEPCASE_1"/>
    <property type="match status" value="1"/>
</dbReference>
<dbReference type="PROSITE" id="PS00393">
    <property type="entry name" value="PEPCASE_2"/>
    <property type="match status" value="1"/>
</dbReference>
<gene>
    <name evidence="1" type="primary">ppc</name>
    <name type="ordered locus">PMI3227</name>
</gene>
<proteinExistence type="inferred from homology"/>
<reference key="1">
    <citation type="journal article" date="2008" name="J. Bacteriol.">
        <title>Complete genome sequence of uropathogenic Proteus mirabilis, a master of both adherence and motility.</title>
        <authorList>
            <person name="Pearson M.M."/>
            <person name="Sebaihia M."/>
            <person name="Churcher C."/>
            <person name="Quail M.A."/>
            <person name="Seshasayee A.S."/>
            <person name="Luscombe N.M."/>
            <person name="Abdellah Z."/>
            <person name="Arrosmith C."/>
            <person name="Atkin B."/>
            <person name="Chillingworth T."/>
            <person name="Hauser H."/>
            <person name="Jagels K."/>
            <person name="Moule S."/>
            <person name="Mungall K."/>
            <person name="Norbertczak H."/>
            <person name="Rabbinowitsch E."/>
            <person name="Walker D."/>
            <person name="Whithead S."/>
            <person name="Thomson N.R."/>
            <person name="Rather P.N."/>
            <person name="Parkhill J."/>
            <person name="Mobley H.L.T."/>
        </authorList>
    </citation>
    <scope>NUCLEOTIDE SEQUENCE [LARGE SCALE GENOMIC DNA]</scope>
    <source>
        <strain>HI4320</strain>
    </source>
</reference>
<feature type="chain" id="PRO_1000129836" description="Phosphoenolpyruvate carboxylase">
    <location>
        <begin position="1"/>
        <end position="878"/>
    </location>
</feature>
<feature type="active site" evidence="1">
    <location>
        <position position="137"/>
    </location>
</feature>
<feature type="active site" evidence="1">
    <location>
        <position position="545"/>
    </location>
</feature>
<keyword id="KW-0120">Carbon dioxide fixation</keyword>
<keyword id="KW-0456">Lyase</keyword>
<keyword id="KW-0460">Magnesium</keyword>
<keyword id="KW-1185">Reference proteome</keyword>
<accession>B4F183</accession>
<protein>
    <recommendedName>
        <fullName evidence="1">Phosphoenolpyruvate carboxylase</fullName>
        <shortName evidence="1">PEPC</shortName>
        <shortName evidence="1">PEPCase</shortName>
        <ecNumber evidence="1">4.1.1.31</ecNumber>
    </recommendedName>
</protein>
<evidence type="ECO:0000255" key="1">
    <source>
        <dbReference type="HAMAP-Rule" id="MF_00595"/>
    </source>
</evidence>